<feature type="chain" id="PRO_0000232532" description="tRNA-splicing ligase RtcB, 1st part" evidence="2">
    <location>
        <begin position="1"/>
        <end position="105"/>
    </location>
</feature>
<feature type="chain" id="PRO_0000232533" description="Pfu hyp2 intein" evidence="2">
    <location>
        <begin position="106"/>
        <end position="586"/>
    </location>
</feature>
<feature type="chain" id="PRO_0000232534" description="tRNA-splicing ligase RtcB, 2nd part" evidence="2">
    <location>
        <begin position="587"/>
        <end position="970"/>
    </location>
</feature>
<feature type="domain" description="DOD-type homing endonuclease" evidence="3">
    <location>
        <begin position="256"/>
        <end position="420"/>
    </location>
</feature>
<feature type="active site" description="GMP-histidine intermediate" evidence="1">
    <location>
        <position position="893"/>
    </location>
</feature>
<feature type="binding site" evidence="1">
    <location>
        <position position="103"/>
    </location>
    <ligand>
        <name>Mn(2+)</name>
        <dbReference type="ChEBI" id="CHEBI:29035"/>
        <label>1</label>
    </ligand>
</feature>
<feature type="binding site" evidence="1">
    <location>
        <position position="587"/>
    </location>
    <ligand>
        <name>Mn(2+)</name>
        <dbReference type="ChEBI" id="CHEBI:29035"/>
        <label>1</label>
    </ligand>
</feature>
<feature type="binding site" evidence="1">
    <location>
        <position position="587"/>
    </location>
    <ligand>
        <name>Mn(2+)</name>
        <dbReference type="ChEBI" id="CHEBI:29035"/>
        <label>2</label>
    </ligand>
</feature>
<feature type="binding site" evidence="1">
    <location>
        <begin position="691"/>
        <end position="695"/>
    </location>
    <ligand>
        <name>GMP</name>
        <dbReference type="ChEBI" id="CHEBI:58115"/>
    </ligand>
</feature>
<feature type="binding site" evidence="1">
    <location>
        <position position="692"/>
    </location>
    <ligand>
        <name>Mn(2+)</name>
        <dbReference type="ChEBI" id="CHEBI:29035"/>
        <label>1</label>
    </ligand>
</feature>
<feature type="binding site" evidence="1">
    <location>
        <position position="723"/>
    </location>
    <ligand>
        <name>Mn(2+)</name>
        <dbReference type="ChEBI" id="CHEBI:29035"/>
        <label>2</label>
    </ligand>
</feature>
<feature type="binding site" evidence="1">
    <location>
        <begin position="818"/>
        <end position="819"/>
    </location>
    <ligand>
        <name>GMP</name>
        <dbReference type="ChEBI" id="CHEBI:58115"/>
    </ligand>
</feature>
<feature type="binding site" evidence="1">
    <location>
        <position position="818"/>
    </location>
    <ligand>
        <name>Mn(2+)</name>
        <dbReference type="ChEBI" id="CHEBI:29035"/>
        <label>2</label>
    </ligand>
</feature>
<feature type="binding site" evidence="1">
    <location>
        <begin position="867"/>
        <end position="870"/>
    </location>
    <ligand>
        <name>GMP</name>
        <dbReference type="ChEBI" id="CHEBI:58115"/>
    </ligand>
</feature>
<feature type="binding site" evidence="1">
    <location>
        <position position="874"/>
    </location>
    <ligand>
        <name>GMP</name>
        <dbReference type="ChEBI" id="CHEBI:58115"/>
    </ligand>
</feature>
<feature type="binding site" evidence="1">
    <location>
        <begin position="893"/>
        <end position="896"/>
    </location>
    <ligand>
        <name>GMP</name>
        <dbReference type="ChEBI" id="CHEBI:58115"/>
    </ligand>
</feature>
<feature type="binding site" evidence="1">
    <location>
        <position position="969"/>
    </location>
    <ligand>
        <name>GMP</name>
        <dbReference type="ChEBI" id="CHEBI:58115"/>
    </ligand>
</feature>
<protein>
    <recommendedName>
        <fullName evidence="1">tRNA-splicing ligase RtcB</fullName>
        <ecNumber evidence="1">6.5.1.8</ecNumber>
    </recommendedName>
    <alternativeName>
        <fullName evidence="1">3'-phosphate/5'-hydroxy nucleic acid ligase</fullName>
    </alternativeName>
    <component>
        <recommendedName>
            <fullName>Pfu hyp2 intein</fullName>
            <ecNumber>3.1.-.-</ecNumber>
        </recommendedName>
    </component>
</protein>
<reference key="1">
    <citation type="journal article" date="1999" name="Genetics">
        <title>Divergence of the hyperthermophilic archaea Pyrococcus furiosus and P. horikoshii inferred from complete genomic sequences.</title>
        <authorList>
            <person name="Maeder D.L."/>
            <person name="Weiss R.B."/>
            <person name="Dunn D.M."/>
            <person name="Cherry J.L."/>
            <person name="Gonzalez J.M."/>
            <person name="DiRuggiero J."/>
            <person name="Robb F.T."/>
        </authorList>
    </citation>
    <scope>NUCLEOTIDE SEQUENCE [LARGE SCALE GENOMIC DNA]</scope>
    <source>
        <strain>ATCC 43587 / DSM 3638 / JCM 8422 / Vc1</strain>
    </source>
</reference>
<keyword id="KW-0068">Autocatalytic cleavage</keyword>
<keyword id="KW-0238">DNA-binding</keyword>
<keyword id="KW-0255">Endonuclease</keyword>
<keyword id="KW-0342">GTP-binding</keyword>
<keyword id="KW-0378">Hydrolase</keyword>
<keyword id="KW-0404">Intron homing</keyword>
<keyword id="KW-0436">Ligase</keyword>
<keyword id="KW-0464">Manganese</keyword>
<keyword id="KW-0479">Metal-binding</keyword>
<keyword id="KW-0540">Nuclease</keyword>
<keyword id="KW-0547">Nucleotide-binding</keyword>
<keyword id="KW-0651">Protein splicing</keyword>
<keyword id="KW-1185">Reference proteome</keyword>
<keyword id="KW-0819">tRNA processing</keyword>
<dbReference type="EC" id="6.5.1.8" evidence="1"/>
<dbReference type="EC" id="3.1.-.-"/>
<dbReference type="EMBL" id="AE009950">
    <property type="protein sequence ID" value="AAL81739.1"/>
    <property type="molecule type" value="Genomic_DNA"/>
</dbReference>
<dbReference type="SMR" id="Q8U0H4"/>
<dbReference type="IntAct" id="Q8U0H4">
    <property type="interactions" value="1"/>
</dbReference>
<dbReference type="STRING" id="186497.PF1615"/>
<dbReference type="PaxDb" id="186497-PF1615"/>
<dbReference type="KEGG" id="pfu:PF1615"/>
<dbReference type="PATRIC" id="fig|186497.12.peg.1682"/>
<dbReference type="eggNOG" id="arCOG03158">
    <property type="taxonomic scope" value="Archaea"/>
</dbReference>
<dbReference type="eggNOG" id="arCOG04246">
    <property type="taxonomic scope" value="Archaea"/>
</dbReference>
<dbReference type="HOGENOM" id="CLU_012374_0_0_2"/>
<dbReference type="PhylomeDB" id="Q8U0H4"/>
<dbReference type="BRENDA" id="6.5.1.8">
    <property type="organism ID" value="5243"/>
</dbReference>
<dbReference type="Proteomes" id="UP000001013">
    <property type="component" value="Chromosome"/>
</dbReference>
<dbReference type="GO" id="GO:0003677">
    <property type="term" value="F:DNA binding"/>
    <property type="evidence" value="ECO:0007669"/>
    <property type="project" value="UniProtKB-KW"/>
</dbReference>
<dbReference type="GO" id="GO:0004519">
    <property type="term" value="F:endonuclease activity"/>
    <property type="evidence" value="ECO:0007669"/>
    <property type="project" value="UniProtKB-KW"/>
</dbReference>
<dbReference type="GO" id="GO:0005525">
    <property type="term" value="F:GTP binding"/>
    <property type="evidence" value="ECO:0007669"/>
    <property type="project" value="UniProtKB-KW"/>
</dbReference>
<dbReference type="GO" id="GO:0046872">
    <property type="term" value="F:metal ion binding"/>
    <property type="evidence" value="ECO:0007669"/>
    <property type="project" value="UniProtKB-KW"/>
</dbReference>
<dbReference type="GO" id="GO:0003972">
    <property type="term" value="F:RNA ligase (ATP) activity"/>
    <property type="evidence" value="ECO:0007669"/>
    <property type="project" value="TreeGrafter"/>
</dbReference>
<dbReference type="GO" id="GO:0170057">
    <property type="term" value="F:RNA ligase (GTP) activity"/>
    <property type="evidence" value="ECO:0007669"/>
    <property type="project" value="UniProtKB-EC"/>
</dbReference>
<dbReference type="GO" id="GO:0016539">
    <property type="term" value="P:intein-mediated protein splicing"/>
    <property type="evidence" value="ECO:0007669"/>
    <property type="project" value="InterPro"/>
</dbReference>
<dbReference type="GO" id="GO:0006314">
    <property type="term" value="P:intron homing"/>
    <property type="evidence" value="ECO:0007669"/>
    <property type="project" value="UniProtKB-KW"/>
</dbReference>
<dbReference type="GO" id="GO:0008033">
    <property type="term" value="P:tRNA processing"/>
    <property type="evidence" value="ECO:0007669"/>
    <property type="project" value="UniProtKB-KW"/>
</dbReference>
<dbReference type="CDD" id="cd00081">
    <property type="entry name" value="Hint"/>
    <property type="match status" value="2"/>
</dbReference>
<dbReference type="FunFam" id="3.10.28.10:FF:000020">
    <property type="entry name" value="tRNA-splicing ligase RtcB"/>
    <property type="match status" value="1"/>
</dbReference>
<dbReference type="FunFam" id="3.90.1860.10:FF:000007">
    <property type="entry name" value="tRNA-splicing ligase RtcB"/>
    <property type="match status" value="1"/>
</dbReference>
<dbReference type="Gene3D" id="3.10.28.10">
    <property type="entry name" value="Homing endonucleases"/>
    <property type="match status" value="1"/>
</dbReference>
<dbReference type="Gene3D" id="3.90.1860.10">
    <property type="entry name" value="tRNA-splicing ligase RtcB"/>
    <property type="match status" value="2"/>
</dbReference>
<dbReference type="InterPro" id="IPR003586">
    <property type="entry name" value="Hint_dom_C"/>
</dbReference>
<dbReference type="InterPro" id="IPR003587">
    <property type="entry name" value="Hint_dom_N"/>
</dbReference>
<dbReference type="InterPro" id="IPR036844">
    <property type="entry name" value="Hint_dom_sf"/>
</dbReference>
<dbReference type="InterPro" id="IPR027434">
    <property type="entry name" value="Homing_endonucl"/>
</dbReference>
<dbReference type="InterPro" id="IPR006142">
    <property type="entry name" value="INTEIN"/>
</dbReference>
<dbReference type="InterPro" id="IPR030934">
    <property type="entry name" value="Intein_C"/>
</dbReference>
<dbReference type="InterPro" id="IPR004042">
    <property type="entry name" value="Intein_endonuc_central"/>
</dbReference>
<dbReference type="InterPro" id="IPR006141">
    <property type="entry name" value="Intein_N"/>
</dbReference>
<dbReference type="InterPro" id="IPR004860">
    <property type="entry name" value="LAGLIDADG_dom"/>
</dbReference>
<dbReference type="InterPro" id="IPR001233">
    <property type="entry name" value="RtcB"/>
</dbReference>
<dbReference type="InterPro" id="IPR036025">
    <property type="entry name" value="RtcB-like_sf"/>
</dbReference>
<dbReference type="InterPro" id="IPR053454">
    <property type="entry name" value="RtcB_ligase"/>
</dbReference>
<dbReference type="NCBIfam" id="TIGR01443">
    <property type="entry name" value="intein_Cterm"/>
    <property type="match status" value="1"/>
</dbReference>
<dbReference type="NCBIfam" id="TIGR01445">
    <property type="entry name" value="intein_Nterm"/>
    <property type="match status" value="1"/>
</dbReference>
<dbReference type="NCBIfam" id="NF038162">
    <property type="entry name" value="RctB_rel_intein"/>
    <property type="match status" value="1"/>
</dbReference>
<dbReference type="PANTHER" id="PTHR11118">
    <property type="entry name" value="RNA-SPLICING LIGASE RTCB HOMOLOG"/>
    <property type="match status" value="1"/>
</dbReference>
<dbReference type="PANTHER" id="PTHR11118:SF1">
    <property type="entry name" value="RNA-SPLICING LIGASE RTCB HOMOLOG"/>
    <property type="match status" value="1"/>
</dbReference>
<dbReference type="Pfam" id="PF14890">
    <property type="entry name" value="Intein_splicing"/>
    <property type="match status" value="1"/>
</dbReference>
<dbReference type="Pfam" id="PF14528">
    <property type="entry name" value="LAGLIDADG_3"/>
    <property type="match status" value="1"/>
</dbReference>
<dbReference type="Pfam" id="PF01139">
    <property type="entry name" value="RtcB"/>
    <property type="match status" value="2"/>
</dbReference>
<dbReference type="PRINTS" id="PR00379">
    <property type="entry name" value="INTEIN"/>
</dbReference>
<dbReference type="SMART" id="SM00305">
    <property type="entry name" value="HintC"/>
    <property type="match status" value="1"/>
</dbReference>
<dbReference type="SMART" id="SM00306">
    <property type="entry name" value="HintN"/>
    <property type="match status" value="1"/>
</dbReference>
<dbReference type="SUPFAM" id="SSF51294">
    <property type="entry name" value="Hedgehog/intein (Hint) domain"/>
    <property type="match status" value="1"/>
</dbReference>
<dbReference type="SUPFAM" id="SSF55608">
    <property type="entry name" value="Homing endonucleases"/>
    <property type="match status" value="1"/>
</dbReference>
<dbReference type="SUPFAM" id="SSF103365">
    <property type="entry name" value="Hypothetical protein PH1602"/>
    <property type="match status" value="2"/>
</dbReference>
<dbReference type="PROSITE" id="PS50818">
    <property type="entry name" value="INTEIN_C_TER"/>
    <property type="match status" value="1"/>
</dbReference>
<dbReference type="PROSITE" id="PS50819">
    <property type="entry name" value="INTEIN_ENDONUCLEASE"/>
    <property type="match status" value="1"/>
</dbReference>
<dbReference type="PROSITE" id="PS50817">
    <property type="entry name" value="INTEIN_N_TER"/>
    <property type="match status" value="1"/>
</dbReference>
<gene>
    <name type="primary">rtcB</name>
    <name type="ordered locus">PF1615</name>
</gene>
<comment type="function">
    <text evidence="1">Essential for tRNA splicing and maturation. Acts by directly joining spliced tRNA halves to mature-sized tRNAs. Joins RNA with 2',3'-cyclic-phosphate or 3'-phosphate ends to RNA with 5'-hydroxy ends.</text>
</comment>
<comment type="catalytic activity">
    <reaction evidence="1">
        <text>a 3'-end 3'-phospho-ribonucleotide-RNA + a 5'-end dephospho-ribonucleoside-RNA + GTP = a ribonucleotidyl-ribonucleotide-RNA + GMP + diphosphate</text>
        <dbReference type="Rhea" id="RHEA:68076"/>
        <dbReference type="Rhea" id="RHEA-COMP:10463"/>
        <dbReference type="Rhea" id="RHEA-COMP:13936"/>
        <dbReference type="Rhea" id="RHEA-COMP:17355"/>
        <dbReference type="ChEBI" id="CHEBI:33019"/>
        <dbReference type="ChEBI" id="CHEBI:37565"/>
        <dbReference type="ChEBI" id="CHEBI:58115"/>
        <dbReference type="ChEBI" id="CHEBI:83062"/>
        <dbReference type="ChEBI" id="CHEBI:138284"/>
        <dbReference type="ChEBI" id="CHEBI:173118"/>
        <dbReference type="EC" id="6.5.1.8"/>
    </reaction>
</comment>
<comment type="catalytic activity">
    <reaction evidence="1">
        <text>a 3'-end 2',3'-cyclophospho-ribonucleotide-RNA + a 5'-end dephospho-ribonucleoside-RNA + GTP + H2O = a ribonucleotidyl-ribonucleotide-RNA + GMP + diphosphate + H(+)</text>
        <dbReference type="Rhea" id="RHEA:68080"/>
        <dbReference type="Rhea" id="RHEA-COMP:10464"/>
        <dbReference type="Rhea" id="RHEA-COMP:13936"/>
        <dbReference type="Rhea" id="RHEA-COMP:17355"/>
        <dbReference type="ChEBI" id="CHEBI:15377"/>
        <dbReference type="ChEBI" id="CHEBI:15378"/>
        <dbReference type="ChEBI" id="CHEBI:33019"/>
        <dbReference type="ChEBI" id="CHEBI:37565"/>
        <dbReference type="ChEBI" id="CHEBI:58115"/>
        <dbReference type="ChEBI" id="CHEBI:83064"/>
        <dbReference type="ChEBI" id="CHEBI:138284"/>
        <dbReference type="ChEBI" id="CHEBI:173118"/>
        <dbReference type="EC" id="6.5.1.8"/>
    </reaction>
</comment>
<comment type="cofactor">
    <cofactor evidence="1">
        <name>Mn(2+)</name>
        <dbReference type="ChEBI" id="CHEBI:29035"/>
    </cofactor>
    <text evidence="1">Binds 2 manganese ions per subunit.</text>
</comment>
<comment type="subunit">
    <text evidence="1">Monomer.</text>
</comment>
<comment type="miscellaneous">
    <text evidence="1">Ligation proceeds through 3 nucleotidyl transfer steps, with 2',3'-cyclic phosphate termini being hydrolyzed to 3'-P termini in a step that precedes 3'-P activation with GMP. In the first nucleotidyl transfer step, RtcB reacts with GTP to form a covalent RtcB-histidine-GMP intermediate with release of PPi; in the second step, the GMP moiety is transferred to the RNA 3'-P; in the third step, the 5'-OH from the opposite RNA strand attacks the activated 3'-P to form a 3',5'-phosphodiester bond and release GMP.</text>
</comment>
<comment type="similarity">
    <text evidence="4">Belongs to the RtcB family.</text>
</comment>
<sequence>MIILRVVNVAVPLKRIDKIRWEIPKFDKRMKVPGRVYADDVLIEKMRQDRTLEQAANVAMLPGIYKYSIVMPDGHQGYGFPIGGVAAFDIKEGVISPGGIGYDINCLAPGTKVLTEHGYWLKIEEMPEKFKLQRLRLYNIEEGHNDFSRVAFVAERNIEKDETAIRIVTETGTLIEGSEDHPVLTPQGYVYLKNIKEGDYVIVYPFEGVPYEEKKGIIIDESAFEGEDPQVIKFLKERNLLPLRWEDPKIGTLARILGFALGDGHLGEMGGRLVLAFYGREETLRELKKDLESLGIKANLYVREKNYRIKTESGEYSGKTVLAELRVSSRSFALLLEKLGMPRGEKTKKAYRIPVWIMEAPLWVKRNFLAGFFGADGSIVEFKGTTPLPIHLTQAKDVALEENLKEFLYDISRILEEFGVKTTIYKVNSKKSVTYRLSIVGEENIRNFLGKINYEYDPKKKAKGLIAYAYLKFKESVKKERRKAMEISKKIYEETGNIDRAYKAVKDIVNRRFVERTIYEGERNPRVPKNFLTFEEFAKERGYEGGFVAEKVVKVERIKPEYDRFYDIGVYHEAHNFIANGIVVHNCGVRLIRTNLTEKDVRPKIKQLVDTLFKNVPSGVGSQGKVRLHWTQIDDVLVDGAKWAVDQGYGWERDLERLEEGGRMEGADPDAVSQRAKQRGAPQLGSLGSGNHFLEVQVVDKIFDEEIAKAYGLFEGQVVVMVHTGSRGLGHQVASDYLRIMERAIRKYGIPWPDRELVSVPFQSEEGQRYFSAMKAAANFAWANRQMITHWVRESFQEVFRQDPEGDLGMEIVYDVAHNIGKVEEHEVDGKKVKVIVHRKGATRAFPPGHEAIPKIYRDVGQPVLIPGSMGTASYVLAGTEGAMAETFGSTCHGAGRVLSRAAATRQYRGDRIRDELLRRGIYVRAASMRVVAEEAPGAYKNVDNVVKVVSEAGIAKLVARMRPIGVAKG</sequence>
<organism>
    <name type="scientific">Pyrococcus furiosus (strain ATCC 43587 / DSM 3638 / JCM 8422 / Vc1)</name>
    <dbReference type="NCBI Taxonomy" id="186497"/>
    <lineage>
        <taxon>Archaea</taxon>
        <taxon>Methanobacteriati</taxon>
        <taxon>Methanobacteriota</taxon>
        <taxon>Thermococci</taxon>
        <taxon>Thermococcales</taxon>
        <taxon>Thermococcaceae</taxon>
        <taxon>Pyrococcus</taxon>
    </lineage>
</organism>
<accession>Q8U0H4</accession>
<evidence type="ECO:0000250" key="1">
    <source>
        <dbReference type="UniProtKB" id="O59245"/>
    </source>
</evidence>
<evidence type="ECO:0000255" key="2"/>
<evidence type="ECO:0000255" key="3">
    <source>
        <dbReference type="PROSITE-ProRule" id="PRU00273"/>
    </source>
</evidence>
<evidence type="ECO:0000305" key="4"/>
<name>RTCB_PYRFU</name>
<proteinExistence type="inferred from homology"/>